<accession>Q6KIG6</accession>
<proteinExistence type="inferred from homology"/>
<sequence>MYIMKLLIKEALEDALLKLNISRKVILTDAKDFGDFSSNIAMVLQKDLGKNPLEIAQMIVEKINKEKFLIEKIEIVKPGFINFFLDHKFYVYLLEKFSKNDFLIELEKTYTYNLEYVSANPTGFLHIGHARGAAIGDTLANILEFANNKVIREYYVNDAGNQISILAYALYIRYQQILGNKTLNLPEDSYHGEDIKYFAKIFHKKYQEKFKNVDYSLEVENFFKDEGVKIALEKIKLDLKTFRVEFDLYTSEKSIYPLIEKSLKKLKNTYEQDGALWLKTTDYGDDKDRVLIKNDGTYTYFAPDLAYHYVKKTRSENVDYLIDFFGADHIGYVKRMQIALEQFGFSKDTLNVLILEMVKLRKNGTEFVMSKRKGTAISLEDLIELIGVDNARFFLVDHSSSSKLDLEIDLIAEKNLSNGAFIIQYAYARTNSILEKTKVTLDVKLIRKPFDDKFEMKLVNVLKEFPILIEKIAENFKIHLLSQYLITLAKSFNSFYSNSKIIDSEEELKLILLVKATQAVLKKGLDLLKVEAPERI</sequence>
<protein>
    <recommendedName>
        <fullName evidence="1">Arginine--tRNA ligase</fullName>
        <ecNumber evidence="1">6.1.1.19</ecNumber>
    </recommendedName>
    <alternativeName>
        <fullName evidence="1">Arginyl-tRNA synthetase</fullName>
        <shortName evidence="1">ArgRS</shortName>
    </alternativeName>
</protein>
<gene>
    <name evidence="1" type="primary">argS</name>
    <name type="ordered locus">MMOB1240</name>
</gene>
<reference key="1">
    <citation type="journal article" date="2004" name="Genome Res.">
        <title>The complete genome and proteome of Mycoplasma mobile.</title>
        <authorList>
            <person name="Jaffe J.D."/>
            <person name="Stange-Thomann N."/>
            <person name="Smith C."/>
            <person name="DeCaprio D."/>
            <person name="Fisher S."/>
            <person name="Butler J."/>
            <person name="Calvo S."/>
            <person name="Elkins T."/>
            <person name="FitzGerald M.G."/>
            <person name="Hafez N."/>
            <person name="Kodira C.D."/>
            <person name="Major J."/>
            <person name="Wang S."/>
            <person name="Wilkinson J."/>
            <person name="Nicol R."/>
            <person name="Nusbaum C."/>
            <person name="Birren B."/>
            <person name="Berg H.C."/>
            <person name="Church G.M."/>
        </authorList>
    </citation>
    <scope>NUCLEOTIDE SEQUENCE [LARGE SCALE GENOMIC DNA]</scope>
    <source>
        <strain>ATCC 43663 / NCTC 11711 / 163 K</strain>
    </source>
</reference>
<dbReference type="EC" id="6.1.1.19" evidence="1"/>
<dbReference type="EMBL" id="AE017308">
    <property type="protein sequence ID" value="AAT27610.1"/>
    <property type="molecule type" value="Genomic_DNA"/>
</dbReference>
<dbReference type="SMR" id="Q6KIG6"/>
<dbReference type="STRING" id="267748.MMOB1240"/>
<dbReference type="KEGG" id="mmo:MMOB1240"/>
<dbReference type="eggNOG" id="COG0018">
    <property type="taxonomic scope" value="Bacteria"/>
</dbReference>
<dbReference type="HOGENOM" id="CLU_006406_0_1_14"/>
<dbReference type="OrthoDB" id="9805987at2"/>
<dbReference type="Proteomes" id="UP000009072">
    <property type="component" value="Chromosome"/>
</dbReference>
<dbReference type="GO" id="GO:0005737">
    <property type="term" value="C:cytoplasm"/>
    <property type="evidence" value="ECO:0007669"/>
    <property type="project" value="UniProtKB-SubCell"/>
</dbReference>
<dbReference type="GO" id="GO:0004814">
    <property type="term" value="F:arginine-tRNA ligase activity"/>
    <property type="evidence" value="ECO:0007669"/>
    <property type="project" value="UniProtKB-UniRule"/>
</dbReference>
<dbReference type="GO" id="GO:0005524">
    <property type="term" value="F:ATP binding"/>
    <property type="evidence" value="ECO:0007669"/>
    <property type="project" value="UniProtKB-UniRule"/>
</dbReference>
<dbReference type="GO" id="GO:0006420">
    <property type="term" value="P:arginyl-tRNA aminoacylation"/>
    <property type="evidence" value="ECO:0007669"/>
    <property type="project" value="UniProtKB-UniRule"/>
</dbReference>
<dbReference type="CDD" id="cd00671">
    <property type="entry name" value="ArgRS_core"/>
    <property type="match status" value="1"/>
</dbReference>
<dbReference type="Gene3D" id="3.30.1360.70">
    <property type="entry name" value="Arginyl tRNA synthetase N-terminal domain"/>
    <property type="match status" value="1"/>
</dbReference>
<dbReference type="Gene3D" id="3.40.50.620">
    <property type="entry name" value="HUPs"/>
    <property type="match status" value="1"/>
</dbReference>
<dbReference type="Gene3D" id="1.10.730.10">
    <property type="entry name" value="Isoleucyl-tRNA Synthetase, Domain 1"/>
    <property type="match status" value="1"/>
</dbReference>
<dbReference type="HAMAP" id="MF_00123">
    <property type="entry name" value="Arg_tRNA_synth"/>
    <property type="match status" value="1"/>
</dbReference>
<dbReference type="InterPro" id="IPR001412">
    <property type="entry name" value="aa-tRNA-synth_I_CS"/>
</dbReference>
<dbReference type="InterPro" id="IPR001278">
    <property type="entry name" value="Arg-tRNA-ligase"/>
</dbReference>
<dbReference type="InterPro" id="IPR005148">
    <property type="entry name" value="Arg-tRNA-synth_N"/>
</dbReference>
<dbReference type="InterPro" id="IPR036695">
    <property type="entry name" value="Arg-tRNA-synth_N_sf"/>
</dbReference>
<dbReference type="InterPro" id="IPR035684">
    <property type="entry name" value="ArgRS_core"/>
</dbReference>
<dbReference type="InterPro" id="IPR008909">
    <property type="entry name" value="DALR_anticod-bd"/>
</dbReference>
<dbReference type="InterPro" id="IPR014729">
    <property type="entry name" value="Rossmann-like_a/b/a_fold"/>
</dbReference>
<dbReference type="InterPro" id="IPR009080">
    <property type="entry name" value="tRNAsynth_Ia_anticodon-bd"/>
</dbReference>
<dbReference type="NCBIfam" id="TIGR00456">
    <property type="entry name" value="argS"/>
    <property type="match status" value="1"/>
</dbReference>
<dbReference type="PANTHER" id="PTHR11956:SF5">
    <property type="entry name" value="ARGININE--TRNA LIGASE, CYTOPLASMIC"/>
    <property type="match status" value="1"/>
</dbReference>
<dbReference type="PANTHER" id="PTHR11956">
    <property type="entry name" value="ARGINYL-TRNA SYNTHETASE"/>
    <property type="match status" value="1"/>
</dbReference>
<dbReference type="Pfam" id="PF03485">
    <property type="entry name" value="Arg_tRNA_synt_N"/>
    <property type="match status" value="1"/>
</dbReference>
<dbReference type="Pfam" id="PF05746">
    <property type="entry name" value="DALR_1"/>
    <property type="match status" value="1"/>
</dbReference>
<dbReference type="Pfam" id="PF00750">
    <property type="entry name" value="tRNA-synt_1d"/>
    <property type="match status" value="1"/>
</dbReference>
<dbReference type="PRINTS" id="PR01038">
    <property type="entry name" value="TRNASYNTHARG"/>
</dbReference>
<dbReference type="SMART" id="SM01016">
    <property type="entry name" value="Arg_tRNA_synt_N"/>
    <property type="match status" value="1"/>
</dbReference>
<dbReference type="SMART" id="SM00836">
    <property type="entry name" value="DALR_1"/>
    <property type="match status" value="1"/>
</dbReference>
<dbReference type="SUPFAM" id="SSF47323">
    <property type="entry name" value="Anticodon-binding domain of a subclass of class I aminoacyl-tRNA synthetases"/>
    <property type="match status" value="1"/>
</dbReference>
<dbReference type="SUPFAM" id="SSF55190">
    <property type="entry name" value="Arginyl-tRNA synthetase (ArgRS), N-terminal 'additional' domain"/>
    <property type="match status" value="1"/>
</dbReference>
<dbReference type="SUPFAM" id="SSF52374">
    <property type="entry name" value="Nucleotidylyl transferase"/>
    <property type="match status" value="1"/>
</dbReference>
<dbReference type="PROSITE" id="PS00178">
    <property type="entry name" value="AA_TRNA_LIGASE_I"/>
    <property type="match status" value="1"/>
</dbReference>
<feature type="chain" id="PRO_0000242050" description="Arginine--tRNA ligase">
    <location>
        <begin position="1"/>
        <end position="536"/>
    </location>
</feature>
<feature type="short sequence motif" description="'HIGH' region">
    <location>
        <begin position="119"/>
        <end position="129"/>
    </location>
</feature>
<organism>
    <name type="scientific">Mycoplasma mobile (strain ATCC 43663 / 163K / NCTC 11711)</name>
    <name type="common">Mesomycoplasma mobile</name>
    <dbReference type="NCBI Taxonomy" id="267748"/>
    <lineage>
        <taxon>Bacteria</taxon>
        <taxon>Bacillati</taxon>
        <taxon>Mycoplasmatota</taxon>
        <taxon>Mycoplasmoidales</taxon>
        <taxon>Metamycoplasmataceae</taxon>
        <taxon>Mesomycoplasma</taxon>
    </lineage>
</organism>
<keyword id="KW-0030">Aminoacyl-tRNA synthetase</keyword>
<keyword id="KW-0067">ATP-binding</keyword>
<keyword id="KW-0963">Cytoplasm</keyword>
<keyword id="KW-0436">Ligase</keyword>
<keyword id="KW-0547">Nucleotide-binding</keyword>
<keyword id="KW-0648">Protein biosynthesis</keyword>
<keyword id="KW-1185">Reference proteome</keyword>
<evidence type="ECO:0000255" key="1">
    <source>
        <dbReference type="HAMAP-Rule" id="MF_00123"/>
    </source>
</evidence>
<name>SYR_MYCM1</name>
<comment type="catalytic activity">
    <reaction evidence="1">
        <text>tRNA(Arg) + L-arginine + ATP = L-arginyl-tRNA(Arg) + AMP + diphosphate</text>
        <dbReference type="Rhea" id="RHEA:20301"/>
        <dbReference type="Rhea" id="RHEA-COMP:9658"/>
        <dbReference type="Rhea" id="RHEA-COMP:9673"/>
        <dbReference type="ChEBI" id="CHEBI:30616"/>
        <dbReference type="ChEBI" id="CHEBI:32682"/>
        <dbReference type="ChEBI" id="CHEBI:33019"/>
        <dbReference type="ChEBI" id="CHEBI:78442"/>
        <dbReference type="ChEBI" id="CHEBI:78513"/>
        <dbReference type="ChEBI" id="CHEBI:456215"/>
        <dbReference type="EC" id="6.1.1.19"/>
    </reaction>
</comment>
<comment type="subunit">
    <text evidence="1">Monomer.</text>
</comment>
<comment type="subcellular location">
    <subcellularLocation>
        <location evidence="1">Cytoplasm</location>
    </subcellularLocation>
</comment>
<comment type="similarity">
    <text evidence="1">Belongs to the class-I aminoacyl-tRNA synthetase family.</text>
</comment>